<organism>
    <name type="scientific">Marinobacter nauticus (strain ATCC 700491 / DSM 11845 / VT8)</name>
    <name type="common">Marinobacter aquaeolei</name>
    <dbReference type="NCBI Taxonomy" id="351348"/>
    <lineage>
        <taxon>Bacteria</taxon>
        <taxon>Pseudomonadati</taxon>
        <taxon>Pseudomonadota</taxon>
        <taxon>Gammaproteobacteria</taxon>
        <taxon>Pseudomonadales</taxon>
        <taxon>Marinobacteraceae</taxon>
        <taxon>Marinobacter</taxon>
    </lineage>
</organism>
<accession>A1U1B1</accession>
<name>NADA_MARN8</name>
<sequence>MTKAQDRILVQEHLAHQAEPKPLSASEKADLEARIKVALKEKDAVLVAHYYTDPDIQRLAEETGGCVADSLEMARFGNQHPASTVVVAGVRFMGETAKILNPEKKVLMPTLEATCSLDVGCPADEFSEFCDQHPDRTVVVYANTSAAVKARADWVVTSSCAQAIVEHLDAKGEKILWAPDKHLGGYVQKTTGADVLLWDGSCIVHEEFKYRGLEDLKALYPDAAILVHPESPDAVVQMADVVGSTSQLIHAVQTLPNEEFIVATDNGIFYKMQQLAPNKTLIEAPTAGNGATCRSCAHCPWMAMNGLENLLHVLEHGDQEVHVDDELREDALRPLRRMLDFTANMNLKAAGNA</sequence>
<feature type="chain" id="PRO_1000024957" description="Quinolinate synthase">
    <location>
        <begin position="1"/>
        <end position="353"/>
    </location>
</feature>
<feature type="binding site" evidence="1">
    <location>
        <position position="49"/>
    </location>
    <ligand>
        <name>iminosuccinate</name>
        <dbReference type="ChEBI" id="CHEBI:77875"/>
    </ligand>
</feature>
<feature type="binding site" evidence="1">
    <location>
        <position position="70"/>
    </location>
    <ligand>
        <name>iminosuccinate</name>
        <dbReference type="ChEBI" id="CHEBI:77875"/>
    </ligand>
</feature>
<feature type="binding site" evidence="1">
    <location>
        <position position="115"/>
    </location>
    <ligand>
        <name>[4Fe-4S] cluster</name>
        <dbReference type="ChEBI" id="CHEBI:49883"/>
    </ligand>
</feature>
<feature type="binding site" evidence="1">
    <location>
        <begin position="141"/>
        <end position="143"/>
    </location>
    <ligand>
        <name>iminosuccinate</name>
        <dbReference type="ChEBI" id="CHEBI:77875"/>
    </ligand>
</feature>
<feature type="binding site" evidence="1">
    <location>
        <position position="158"/>
    </location>
    <ligand>
        <name>iminosuccinate</name>
        <dbReference type="ChEBI" id="CHEBI:77875"/>
    </ligand>
</feature>
<feature type="binding site" evidence="1">
    <location>
        <position position="202"/>
    </location>
    <ligand>
        <name>[4Fe-4S] cluster</name>
        <dbReference type="ChEBI" id="CHEBI:49883"/>
    </ligand>
</feature>
<feature type="binding site" evidence="1">
    <location>
        <begin position="228"/>
        <end position="230"/>
    </location>
    <ligand>
        <name>iminosuccinate</name>
        <dbReference type="ChEBI" id="CHEBI:77875"/>
    </ligand>
</feature>
<feature type="binding site" evidence="1">
    <location>
        <position position="245"/>
    </location>
    <ligand>
        <name>iminosuccinate</name>
        <dbReference type="ChEBI" id="CHEBI:77875"/>
    </ligand>
</feature>
<feature type="binding site" evidence="1">
    <location>
        <position position="299"/>
    </location>
    <ligand>
        <name>[4Fe-4S] cluster</name>
        <dbReference type="ChEBI" id="CHEBI:49883"/>
    </ligand>
</feature>
<comment type="function">
    <text evidence="1">Catalyzes the condensation of iminoaspartate with dihydroxyacetone phosphate to form quinolinate.</text>
</comment>
<comment type="catalytic activity">
    <reaction evidence="1">
        <text>iminosuccinate + dihydroxyacetone phosphate = quinolinate + phosphate + 2 H2O + H(+)</text>
        <dbReference type="Rhea" id="RHEA:25888"/>
        <dbReference type="ChEBI" id="CHEBI:15377"/>
        <dbReference type="ChEBI" id="CHEBI:15378"/>
        <dbReference type="ChEBI" id="CHEBI:29959"/>
        <dbReference type="ChEBI" id="CHEBI:43474"/>
        <dbReference type="ChEBI" id="CHEBI:57642"/>
        <dbReference type="ChEBI" id="CHEBI:77875"/>
        <dbReference type="EC" id="2.5.1.72"/>
    </reaction>
    <physiologicalReaction direction="left-to-right" evidence="1">
        <dbReference type="Rhea" id="RHEA:25889"/>
    </physiologicalReaction>
</comment>
<comment type="cofactor">
    <cofactor evidence="1">
        <name>[4Fe-4S] cluster</name>
        <dbReference type="ChEBI" id="CHEBI:49883"/>
    </cofactor>
    <text evidence="1">Binds 1 [4Fe-4S] cluster per subunit.</text>
</comment>
<comment type="pathway">
    <text evidence="1">Cofactor biosynthesis; NAD(+) biosynthesis; quinolinate from iminoaspartate: step 1/1.</text>
</comment>
<comment type="subcellular location">
    <subcellularLocation>
        <location evidence="1">Cytoplasm</location>
    </subcellularLocation>
</comment>
<comment type="similarity">
    <text evidence="1">Belongs to the quinolinate synthase family. Type 1 subfamily.</text>
</comment>
<gene>
    <name evidence="1" type="primary">nadA</name>
    <name type="ordered locus">Maqu_1696</name>
</gene>
<evidence type="ECO:0000255" key="1">
    <source>
        <dbReference type="HAMAP-Rule" id="MF_00567"/>
    </source>
</evidence>
<protein>
    <recommendedName>
        <fullName evidence="1">Quinolinate synthase</fullName>
        <ecNumber evidence="1">2.5.1.72</ecNumber>
    </recommendedName>
</protein>
<reference key="1">
    <citation type="journal article" date="2011" name="Appl. Environ. Microbiol.">
        <title>Genomic potential of Marinobacter aquaeolei, a biogeochemical 'opportunitroph'.</title>
        <authorList>
            <person name="Singer E."/>
            <person name="Webb E.A."/>
            <person name="Nelson W.C."/>
            <person name="Heidelberg J.F."/>
            <person name="Ivanova N."/>
            <person name="Pati A."/>
            <person name="Edwards K.J."/>
        </authorList>
    </citation>
    <scope>NUCLEOTIDE SEQUENCE [LARGE SCALE GENOMIC DNA]</scope>
    <source>
        <strain>ATCC 700491 / DSM 11845 / VT8</strain>
    </source>
</reference>
<proteinExistence type="inferred from homology"/>
<dbReference type="EC" id="2.5.1.72" evidence="1"/>
<dbReference type="EMBL" id="CP000514">
    <property type="protein sequence ID" value="ABM18780.1"/>
    <property type="molecule type" value="Genomic_DNA"/>
</dbReference>
<dbReference type="RefSeq" id="WP_011785179.1">
    <property type="nucleotide sequence ID" value="NC_008740.1"/>
</dbReference>
<dbReference type="SMR" id="A1U1B1"/>
<dbReference type="STRING" id="351348.Maqu_1696"/>
<dbReference type="KEGG" id="maq:Maqu_1696"/>
<dbReference type="eggNOG" id="COG0379">
    <property type="taxonomic scope" value="Bacteria"/>
</dbReference>
<dbReference type="HOGENOM" id="CLU_047382_1_0_6"/>
<dbReference type="OrthoDB" id="9801204at2"/>
<dbReference type="UniPathway" id="UPA00253">
    <property type="reaction ID" value="UER00327"/>
</dbReference>
<dbReference type="Proteomes" id="UP000000998">
    <property type="component" value="Chromosome"/>
</dbReference>
<dbReference type="GO" id="GO:0005829">
    <property type="term" value="C:cytosol"/>
    <property type="evidence" value="ECO:0007669"/>
    <property type="project" value="TreeGrafter"/>
</dbReference>
<dbReference type="GO" id="GO:0051539">
    <property type="term" value="F:4 iron, 4 sulfur cluster binding"/>
    <property type="evidence" value="ECO:0007669"/>
    <property type="project" value="UniProtKB-KW"/>
</dbReference>
<dbReference type="GO" id="GO:0046872">
    <property type="term" value="F:metal ion binding"/>
    <property type="evidence" value="ECO:0007669"/>
    <property type="project" value="UniProtKB-KW"/>
</dbReference>
<dbReference type="GO" id="GO:0008987">
    <property type="term" value="F:quinolinate synthetase A activity"/>
    <property type="evidence" value="ECO:0007669"/>
    <property type="project" value="UniProtKB-UniRule"/>
</dbReference>
<dbReference type="GO" id="GO:0034628">
    <property type="term" value="P:'de novo' NAD biosynthetic process from L-aspartate"/>
    <property type="evidence" value="ECO:0007669"/>
    <property type="project" value="TreeGrafter"/>
</dbReference>
<dbReference type="FunFam" id="3.40.50.10800:FF:000003">
    <property type="entry name" value="Quinolinate synthase A"/>
    <property type="match status" value="1"/>
</dbReference>
<dbReference type="Gene3D" id="3.40.50.10800">
    <property type="entry name" value="NadA-like"/>
    <property type="match status" value="3"/>
</dbReference>
<dbReference type="HAMAP" id="MF_00567">
    <property type="entry name" value="NadA_type1"/>
    <property type="match status" value="1"/>
</dbReference>
<dbReference type="InterPro" id="IPR003473">
    <property type="entry name" value="NadA"/>
</dbReference>
<dbReference type="InterPro" id="IPR036094">
    <property type="entry name" value="NadA_sf"/>
</dbReference>
<dbReference type="InterPro" id="IPR023513">
    <property type="entry name" value="Quinolinate_synth_A_type1"/>
</dbReference>
<dbReference type="NCBIfam" id="TIGR00550">
    <property type="entry name" value="nadA"/>
    <property type="match status" value="1"/>
</dbReference>
<dbReference type="NCBIfam" id="NF006877">
    <property type="entry name" value="PRK09375.1-1"/>
    <property type="match status" value="1"/>
</dbReference>
<dbReference type="NCBIfam" id="NF006878">
    <property type="entry name" value="PRK09375.1-2"/>
    <property type="match status" value="1"/>
</dbReference>
<dbReference type="PANTHER" id="PTHR30573:SF0">
    <property type="entry name" value="QUINOLINATE SYNTHASE, CHLOROPLASTIC"/>
    <property type="match status" value="1"/>
</dbReference>
<dbReference type="PANTHER" id="PTHR30573">
    <property type="entry name" value="QUINOLINATE SYNTHETASE A"/>
    <property type="match status" value="1"/>
</dbReference>
<dbReference type="Pfam" id="PF02445">
    <property type="entry name" value="NadA"/>
    <property type="match status" value="1"/>
</dbReference>
<dbReference type="SUPFAM" id="SSF142754">
    <property type="entry name" value="NadA-like"/>
    <property type="match status" value="1"/>
</dbReference>
<keyword id="KW-0004">4Fe-4S</keyword>
<keyword id="KW-0963">Cytoplasm</keyword>
<keyword id="KW-0408">Iron</keyword>
<keyword id="KW-0411">Iron-sulfur</keyword>
<keyword id="KW-0479">Metal-binding</keyword>
<keyword id="KW-0662">Pyridine nucleotide biosynthesis</keyword>
<keyword id="KW-0808">Transferase</keyword>